<evidence type="ECO:0000250" key="1">
    <source>
        <dbReference type="UniProtKB" id="P10961"/>
    </source>
</evidence>
<evidence type="ECO:0000256" key="2">
    <source>
        <dbReference type="SAM" id="MobiDB-lite"/>
    </source>
</evidence>
<evidence type="ECO:0000305" key="3"/>
<evidence type="ECO:0000312" key="4">
    <source>
        <dbReference type="HGNC" id="HGNC:52395"/>
    </source>
</evidence>
<proteinExistence type="inferred from homology"/>
<name>HSFX3_HUMAN</name>
<feature type="chain" id="PRO_0000440583" description="Heat shock transcription factor, X-linked member 3">
    <location>
        <begin position="1"/>
        <end position="333"/>
    </location>
</feature>
<feature type="DNA-binding region" evidence="1">
    <location>
        <begin position="79"/>
        <end position="182"/>
    </location>
</feature>
<feature type="region of interest" description="Disordered" evidence="2">
    <location>
        <begin position="1"/>
        <end position="66"/>
    </location>
</feature>
<feature type="region of interest" description="Disordered" evidence="2">
    <location>
        <begin position="227"/>
        <end position="275"/>
    </location>
</feature>
<feature type="compositionally biased region" description="Low complexity" evidence="2">
    <location>
        <begin position="29"/>
        <end position="39"/>
    </location>
</feature>
<feature type="compositionally biased region" description="Polar residues" evidence="2">
    <location>
        <begin position="49"/>
        <end position="60"/>
    </location>
</feature>
<feature type="compositionally biased region" description="Polar residues" evidence="2">
    <location>
        <begin position="228"/>
        <end position="242"/>
    </location>
</feature>
<keyword id="KW-0238">DNA-binding</keyword>
<keyword id="KW-0539">Nucleus</keyword>
<keyword id="KW-1185">Reference proteome</keyword>
<keyword id="KW-0804">Transcription</keyword>
<keyword id="KW-0805">Transcription regulation</keyword>
<reference key="1">
    <citation type="journal article" date="2005" name="Nature">
        <title>The DNA sequence of the human X chromosome.</title>
        <authorList>
            <person name="Ross M.T."/>
            <person name="Grafham D.V."/>
            <person name="Coffey A.J."/>
            <person name="Scherer S."/>
            <person name="McLay K."/>
            <person name="Muzny D."/>
            <person name="Platzer M."/>
            <person name="Howell G.R."/>
            <person name="Burrows C."/>
            <person name="Bird C.P."/>
            <person name="Frankish A."/>
            <person name="Lovell F.L."/>
            <person name="Howe K.L."/>
            <person name="Ashurst J.L."/>
            <person name="Fulton R.S."/>
            <person name="Sudbrak R."/>
            <person name="Wen G."/>
            <person name="Jones M.C."/>
            <person name="Hurles M.E."/>
            <person name="Andrews T.D."/>
            <person name="Scott C.E."/>
            <person name="Searle S."/>
            <person name="Ramser J."/>
            <person name="Whittaker A."/>
            <person name="Deadman R."/>
            <person name="Carter N.P."/>
            <person name="Hunt S.E."/>
            <person name="Chen R."/>
            <person name="Cree A."/>
            <person name="Gunaratne P."/>
            <person name="Havlak P."/>
            <person name="Hodgson A."/>
            <person name="Metzker M.L."/>
            <person name="Richards S."/>
            <person name="Scott G."/>
            <person name="Steffen D."/>
            <person name="Sodergren E."/>
            <person name="Wheeler D.A."/>
            <person name="Worley K.C."/>
            <person name="Ainscough R."/>
            <person name="Ambrose K.D."/>
            <person name="Ansari-Lari M.A."/>
            <person name="Aradhya S."/>
            <person name="Ashwell R.I."/>
            <person name="Babbage A.K."/>
            <person name="Bagguley C.L."/>
            <person name="Ballabio A."/>
            <person name="Banerjee R."/>
            <person name="Barker G.E."/>
            <person name="Barlow K.F."/>
            <person name="Barrett I.P."/>
            <person name="Bates K.N."/>
            <person name="Beare D.M."/>
            <person name="Beasley H."/>
            <person name="Beasley O."/>
            <person name="Beck A."/>
            <person name="Bethel G."/>
            <person name="Blechschmidt K."/>
            <person name="Brady N."/>
            <person name="Bray-Allen S."/>
            <person name="Bridgeman A.M."/>
            <person name="Brown A.J."/>
            <person name="Brown M.J."/>
            <person name="Bonnin D."/>
            <person name="Bruford E.A."/>
            <person name="Buhay C."/>
            <person name="Burch P."/>
            <person name="Burford D."/>
            <person name="Burgess J."/>
            <person name="Burrill W."/>
            <person name="Burton J."/>
            <person name="Bye J.M."/>
            <person name="Carder C."/>
            <person name="Carrel L."/>
            <person name="Chako J."/>
            <person name="Chapman J.C."/>
            <person name="Chavez D."/>
            <person name="Chen E."/>
            <person name="Chen G."/>
            <person name="Chen Y."/>
            <person name="Chen Z."/>
            <person name="Chinault C."/>
            <person name="Ciccodicola A."/>
            <person name="Clark S.Y."/>
            <person name="Clarke G."/>
            <person name="Clee C.M."/>
            <person name="Clegg S."/>
            <person name="Clerc-Blankenburg K."/>
            <person name="Clifford K."/>
            <person name="Cobley V."/>
            <person name="Cole C.G."/>
            <person name="Conquer J.S."/>
            <person name="Corby N."/>
            <person name="Connor R.E."/>
            <person name="David R."/>
            <person name="Davies J."/>
            <person name="Davis C."/>
            <person name="Davis J."/>
            <person name="Delgado O."/>
            <person name="Deshazo D."/>
            <person name="Dhami P."/>
            <person name="Ding Y."/>
            <person name="Dinh H."/>
            <person name="Dodsworth S."/>
            <person name="Draper H."/>
            <person name="Dugan-Rocha S."/>
            <person name="Dunham A."/>
            <person name="Dunn M."/>
            <person name="Durbin K.J."/>
            <person name="Dutta I."/>
            <person name="Eades T."/>
            <person name="Ellwood M."/>
            <person name="Emery-Cohen A."/>
            <person name="Errington H."/>
            <person name="Evans K.L."/>
            <person name="Faulkner L."/>
            <person name="Francis F."/>
            <person name="Frankland J."/>
            <person name="Fraser A.E."/>
            <person name="Galgoczy P."/>
            <person name="Gilbert J."/>
            <person name="Gill R."/>
            <person name="Gloeckner G."/>
            <person name="Gregory S.G."/>
            <person name="Gribble S."/>
            <person name="Griffiths C."/>
            <person name="Grocock R."/>
            <person name="Gu Y."/>
            <person name="Gwilliam R."/>
            <person name="Hamilton C."/>
            <person name="Hart E.A."/>
            <person name="Hawes A."/>
            <person name="Heath P.D."/>
            <person name="Heitmann K."/>
            <person name="Hennig S."/>
            <person name="Hernandez J."/>
            <person name="Hinzmann B."/>
            <person name="Ho S."/>
            <person name="Hoffs M."/>
            <person name="Howden P.J."/>
            <person name="Huckle E.J."/>
            <person name="Hume J."/>
            <person name="Hunt P.J."/>
            <person name="Hunt A.R."/>
            <person name="Isherwood J."/>
            <person name="Jacob L."/>
            <person name="Johnson D."/>
            <person name="Jones S."/>
            <person name="de Jong P.J."/>
            <person name="Joseph S.S."/>
            <person name="Keenan S."/>
            <person name="Kelly S."/>
            <person name="Kershaw J.K."/>
            <person name="Khan Z."/>
            <person name="Kioschis P."/>
            <person name="Klages S."/>
            <person name="Knights A.J."/>
            <person name="Kosiura A."/>
            <person name="Kovar-Smith C."/>
            <person name="Laird G.K."/>
            <person name="Langford C."/>
            <person name="Lawlor S."/>
            <person name="Leversha M."/>
            <person name="Lewis L."/>
            <person name="Liu W."/>
            <person name="Lloyd C."/>
            <person name="Lloyd D.M."/>
            <person name="Loulseged H."/>
            <person name="Loveland J.E."/>
            <person name="Lovell J.D."/>
            <person name="Lozado R."/>
            <person name="Lu J."/>
            <person name="Lyne R."/>
            <person name="Ma J."/>
            <person name="Maheshwari M."/>
            <person name="Matthews L.H."/>
            <person name="McDowall J."/>
            <person name="McLaren S."/>
            <person name="McMurray A."/>
            <person name="Meidl P."/>
            <person name="Meitinger T."/>
            <person name="Milne S."/>
            <person name="Miner G."/>
            <person name="Mistry S.L."/>
            <person name="Morgan M."/>
            <person name="Morris S."/>
            <person name="Mueller I."/>
            <person name="Mullikin J.C."/>
            <person name="Nguyen N."/>
            <person name="Nordsiek G."/>
            <person name="Nyakatura G."/>
            <person name="O'dell C.N."/>
            <person name="Okwuonu G."/>
            <person name="Palmer S."/>
            <person name="Pandian R."/>
            <person name="Parker D."/>
            <person name="Parrish J."/>
            <person name="Pasternak S."/>
            <person name="Patel D."/>
            <person name="Pearce A.V."/>
            <person name="Pearson D.M."/>
            <person name="Pelan S.E."/>
            <person name="Perez L."/>
            <person name="Porter K.M."/>
            <person name="Ramsey Y."/>
            <person name="Reichwald K."/>
            <person name="Rhodes S."/>
            <person name="Ridler K.A."/>
            <person name="Schlessinger D."/>
            <person name="Schueler M.G."/>
            <person name="Sehra H.K."/>
            <person name="Shaw-Smith C."/>
            <person name="Shen H."/>
            <person name="Sheridan E.M."/>
            <person name="Shownkeen R."/>
            <person name="Skuce C.D."/>
            <person name="Smith M.L."/>
            <person name="Sotheran E.C."/>
            <person name="Steingruber H.E."/>
            <person name="Steward C.A."/>
            <person name="Storey R."/>
            <person name="Swann R.M."/>
            <person name="Swarbreck D."/>
            <person name="Tabor P.E."/>
            <person name="Taudien S."/>
            <person name="Taylor T."/>
            <person name="Teague B."/>
            <person name="Thomas K."/>
            <person name="Thorpe A."/>
            <person name="Timms K."/>
            <person name="Tracey A."/>
            <person name="Trevanion S."/>
            <person name="Tromans A.C."/>
            <person name="d'Urso M."/>
            <person name="Verduzco D."/>
            <person name="Villasana D."/>
            <person name="Waldron L."/>
            <person name="Wall M."/>
            <person name="Wang Q."/>
            <person name="Warren J."/>
            <person name="Warry G.L."/>
            <person name="Wei X."/>
            <person name="West A."/>
            <person name="Whitehead S.L."/>
            <person name="Whiteley M.N."/>
            <person name="Wilkinson J.E."/>
            <person name="Willey D.L."/>
            <person name="Williams G."/>
            <person name="Williams L."/>
            <person name="Williamson A."/>
            <person name="Williamson H."/>
            <person name="Wilming L."/>
            <person name="Woodmansey R.L."/>
            <person name="Wray P.W."/>
            <person name="Yen J."/>
            <person name="Zhang J."/>
            <person name="Zhou J."/>
            <person name="Zoghbi H."/>
            <person name="Zorilla S."/>
            <person name="Buck D."/>
            <person name="Reinhardt R."/>
            <person name="Poustka A."/>
            <person name="Rosenthal A."/>
            <person name="Lehrach H."/>
            <person name="Meindl A."/>
            <person name="Minx P.J."/>
            <person name="Hillier L.W."/>
            <person name="Willard H.F."/>
            <person name="Wilson R.K."/>
            <person name="Waterston R.H."/>
            <person name="Rice C.M."/>
            <person name="Vaudin M."/>
            <person name="Coulson A."/>
            <person name="Nelson D.L."/>
            <person name="Weinstock G."/>
            <person name="Sulston J.E."/>
            <person name="Durbin R.M."/>
            <person name="Hubbard T."/>
            <person name="Gibbs R.A."/>
            <person name="Beck S."/>
            <person name="Rogers J."/>
            <person name="Bentley D.R."/>
        </authorList>
    </citation>
    <scope>NUCLEOTIDE SEQUENCE [LARGE SCALE GENOMIC DNA]</scope>
</reference>
<accession>A0A1B0GWH4</accession>
<organism>
    <name type="scientific">Homo sapiens</name>
    <name type="common">Human</name>
    <dbReference type="NCBI Taxonomy" id="9606"/>
    <lineage>
        <taxon>Eukaryota</taxon>
        <taxon>Metazoa</taxon>
        <taxon>Chordata</taxon>
        <taxon>Craniata</taxon>
        <taxon>Vertebrata</taxon>
        <taxon>Euteleostomi</taxon>
        <taxon>Mammalia</taxon>
        <taxon>Eutheria</taxon>
        <taxon>Euarchontoglires</taxon>
        <taxon>Primates</taxon>
        <taxon>Haplorrhini</taxon>
        <taxon>Catarrhini</taxon>
        <taxon>Hominidae</taxon>
        <taxon>Homo</taxon>
    </lineage>
</organism>
<dbReference type="EMBL" id="AC244197">
    <property type="status" value="NOT_ANNOTATED_CDS"/>
    <property type="molecule type" value="Genomic_DNA"/>
</dbReference>
<dbReference type="CCDS" id="CCDS83499.1"/>
<dbReference type="RefSeq" id="NP_001310008.1">
    <property type="nucleotide sequence ID" value="NM_001323079.3"/>
</dbReference>
<dbReference type="SMR" id="A0A1B0GWH4"/>
<dbReference type="FunCoup" id="A0A1B0GWH4">
    <property type="interactions" value="13"/>
</dbReference>
<dbReference type="BioMuta" id="HSFX3"/>
<dbReference type="MassIVE" id="A0A1B0GWH4"/>
<dbReference type="PeptideAtlas" id="A0A1B0GWH4"/>
<dbReference type="DNASU" id="101928917"/>
<dbReference type="Ensembl" id="ENST00000431993.4">
    <property type="protein sequence ID" value="ENSP00000490928.1"/>
    <property type="gene ID" value="ENSG00000283697.3"/>
</dbReference>
<dbReference type="GeneID" id="101928917"/>
<dbReference type="KEGG" id="hsa:101928917"/>
<dbReference type="MANE-Select" id="ENST00000431993.4">
    <property type="protein sequence ID" value="ENSP00000490928.1"/>
    <property type="RefSeq nucleotide sequence ID" value="NM_001323079.3"/>
    <property type="RefSeq protein sequence ID" value="NP_001310008.1"/>
</dbReference>
<dbReference type="AGR" id="HGNC:52395"/>
<dbReference type="CTD" id="101928917"/>
<dbReference type="GeneCards" id="HSFX3"/>
<dbReference type="HGNC" id="HGNC:52395">
    <property type="gene designation" value="HSFX3"/>
</dbReference>
<dbReference type="HPA" id="ENSG00000283697">
    <property type="expression patterns" value="Tissue enriched (testis)"/>
</dbReference>
<dbReference type="neXtProt" id="NX_A0A1B0GWH4"/>
<dbReference type="VEuPathDB" id="HostDB:ENSG00000283697"/>
<dbReference type="GeneTree" id="ENSGT00940000161825"/>
<dbReference type="InParanoid" id="A0A1B0GWH4"/>
<dbReference type="OMA" id="SATAWME"/>
<dbReference type="OrthoDB" id="6418155at2759"/>
<dbReference type="PAN-GO" id="A0A1B0GWH4">
    <property type="GO annotations" value="4 GO annotations based on evolutionary models"/>
</dbReference>
<dbReference type="BioGRID-ORCS" id="101928917">
    <property type="hits" value="0 hits in 3 CRISPR screens"/>
</dbReference>
<dbReference type="GenomeRNAi" id="101928917"/>
<dbReference type="Pharos" id="A0A1B0GWH4">
    <property type="development level" value="Tdark"/>
</dbReference>
<dbReference type="PRO" id="PR:A0A1B0GWH4"/>
<dbReference type="Proteomes" id="UP000005640">
    <property type="component" value="Chromosome X"/>
</dbReference>
<dbReference type="RNAct" id="A0A1B0GWH4">
    <property type="molecule type" value="protein"/>
</dbReference>
<dbReference type="Bgee" id="ENSG00000283697">
    <property type="expression patterns" value="Expressed in male germ line stem cell (sensu Vertebrata) in testis and 39 other cell types or tissues"/>
</dbReference>
<dbReference type="GO" id="GO:0000785">
    <property type="term" value="C:chromatin"/>
    <property type="evidence" value="ECO:0000247"/>
    <property type="project" value="NTNU_SB"/>
</dbReference>
<dbReference type="GO" id="GO:0005634">
    <property type="term" value="C:nucleus"/>
    <property type="evidence" value="ECO:0007669"/>
    <property type="project" value="UniProtKB-SubCell"/>
</dbReference>
<dbReference type="GO" id="GO:0000981">
    <property type="term" value="F:DNA-binding transcription factor activity, RNA polymerase II-specific"/>
    <property type="evidence" value="ECO:0000247"/>
    <property type="project" value="NTNU_SB"/>
</dbReference>
<dbReference type="GO" id="GO:0043565">
    <property type="term" value="F:sequence-specific DNA binding"/>
    <property type="evidence" value="ECO:0007669"/>
    <property type="project" value="InterPro"/>
</dbReference>
<dbReference type="FunFam" id="1.10.10.10:FF:000349">
    <property type="entry name" value="Heat shock transcription factor, Y-linked"/>
    <property type="match status" value="1"/>
</dbReference>
<dbReference type="Gene3D" id="1.10.10.10">
    <property type="entry name" value="Winged helix-like DNA-binding domain superfamily/Winged helix DNA-binding domain"/>
    <property type="match status" value="1"/>
</dbReference>
<dbReference type="InterPro" id="IPR000232">
    <property type="entry name" value="HSF_DNA-bd"/>
</dbReference>
<dbReference type="InterPro" id="IPR036388">
    <property type="entry name" value="WH-like_DNA-bd_sf"/>
</dbReference>
<dbReference type="InterPro" id="IPR036390">
    <property type="entry name" value="WH_DNA-bd_sf"/>
</dbReference>
<dbReference type="PANTHER" id="PTHR10015">
    <property type="entry name" value="HEAT SHOCK TRANSCRIPTION FACTOR"/>
    <property type="match status" value="1"/>
</dbReference>
<dbReference type="PANTHER" id="PTHR10015:SF140">
    <property type="entry name" value="HEAT SHOCK TRANSCRIPTION FACTOR, X-LINKED MEMBER 3-RELATED"/>
    <property type="match status" value="1"/>
</dbReference>
<dbReference type="Pfam" id="PF00447">
    <property type="entry name" value="HSF_DNA-bind"/>
    <property type="match status" value="1"/>
</dbReference>
<dbReference type="SMART" id="SM00415">
    <property type="entry name" value="HSF"/>
    <property type="match status" value="1"/>
</dbReference>
<dbReference type="SUPFAM" id="SSF46785">
    <property type="entry name" value="Winged helix' DNA-binding domain"/>
    <property type="match status" value="1"/>
</dbReference>
<sequence length="333" mass="37128">MASQNTEQEYEAKLAPSVGGEPTSGGPSGSSPDPNPDSSEVLDRHEDQAMSQDPGSQDNSPPEDRNQRVVNVEDNHNLFRLSFPRKLWTIVEEDTFKSVSWNDDGDAVIIDKDLFQREVLQRKGAERIFKTDSLTSFIRQLNLYGFCKTRPSNSPGNKKMMIYCNSNFQRDKPRLLENIQRKDALRNTAQQATRVPTPKRKNLVATRRSLRIYHINARKEAIKMCQQGAPSVQGPSGTQSFRRSGMWSKKSATRHPLGNGPPQEPNGPSWEGTSGNVTFTSSATTWMEGTGILSSLVYSDNGSVMSLYNICYYALLASLSVMSPNEPSDDEEE</sequence>
<protein>
    <recommendedName>
        <fullName>Heat shock transcription factor, X-linked member 3</fullName>
    </recommendedName>
</protein>
<gene>
    <name evidence="4" type="primary">HSFX3</name>
</gene>
<comment type="subcellular location">
    <subcellularLocation>
        <location evidence="3">Nucleus</location>
    </subcellularLocation>
</comment>
<comment type="similarity">
    <text evidence="3">Belongs to the HSF family.</text>
</comment>